<feature type="chain" id="PRO_0000404650" description="Transcription elongation factor A protein-like 7">
    <location>
        <begin position="1"/>
        <end position="98"/>
    </location>
</feature>
<feature type="region of interest" description="Disordered" evidence="3">
    <location>
        <begin position="1"/>
        <end position="33"/>
    </location>
</feature>
<feature type="coiled-coil region" evidence="2">
    <location>
        <begin position="59"/>
        <end position="89"/>
    </location>
</feature>
<feature type="compositionally biased region" description="Basic and acidic residues" evidence="3">
    <location>
        <begin position="1"/>
        <end position="22"/>
    </location>
</feature>
<accession>A3KGA4</accession>
<name>TCAL7_MOUSE</name>
<organism>
    <name type="scientific">Mus musculus</name>
    <name type="common">Mouse</name>
    <dbReference type="NCBI Taxonomy" id="10090"/>
    <lineage>
        <taxon>Eukaryota</taxon>
        <taxon>Metazoa</taxon>
        <taxon>Chordata</taxon>
        <taxon>Craniata</taxon>
        <taxon>Vertebrata</taxon>
        <taxon>Euteleostomi</taxon>
        <taxon>Mammalia</taxon>
        <taxon>Eutheria</taxon>
        <taxon>Euarchontoglires</taxon>
        <taxon>Glires</taxon>
        <taxon>Rodentia</taxon>
        <taxon>Myomorpha</taxon>
        <taxon>Muroidea</taxon>
        <taxon>Muridae</taxon>
        <taxon>Murinae</taxon>
        <taxon>Mus</taxon>
        <taxon>Mus</taxon>
    </lineage>
</organism>
<keyword id="KW-0175">Coiled coil</keyword>
<keyword id="KW-0539">Nucleus</keyword>
<keyword id="KW-1185">Reference proteome</keyword>
<keyword id="KW-0678">Repressor</keyword>
<keyword id="KW-0804">Transcription</keyword>
<keyword id="KW-0805">Transcription regulation</keyword>
<dbReference type="EMBL" id="AL671493">
    <property type="status" value="NOT_ANNOTATED_CDS"/>
    <property type="molecule type" value="Genomic_DNA"/>
</dbReference>
<dbReference type="CCDS" id="CCDS53193.1"/>
<dbReference type="RefSeq" id="NP_001120641.1">
    <property type="nucleotide sequence ID" value="NM_001127169.1"/>
</dbReference>
<dbReference type="RefSeq" id="XP_006528530.1">
    <property type="nucleotide sequence ID" value="XM_006528467.2"/>
</dbReference>
<dbReference type="SMR" id="A3KGA4"/>
<dbReference type="FunCoup" id="A3KGA4">
    <property type="interactions" value="571"/>
</dbReference>
<dbReference type="STRING" id="10090.ENSMUSP00000108741"/>
<dbReference type="PaxDb" id="10090-ENSMUSP00000108741"/>
<dbReference type="Antibodypedia" id="44282">
    <property type="antibodies" value="73 antibodies from 20 providers"/>
</dbReference>
<dbReference type="Ensembl" id="ENSMUST00000113116.3">
    <property type="protein sequence ID" value="ENSMUSP00000108741.3"/>
    <property type="gene ID" value="ENSMUSG00000079428.9"/>
</dbReference>
<dbReference type="GeneID" id="100040972"/>
<dbReference type="KEGG" id="mmu:100040972"/>
<dbReference type="UCSC" id="uc009uih.2">
    <property type="organism name" value="mouse"/>
</dbReference>
<dbReference type="AGR" id="MGI:1915746"/>
<dbReference type="CTD" id="56849"/>
<dbReference type="MGI" id="MGI:1915746">
    <property type="gene designation" value="Tceal7"/>
</dbReference>
<dbReference type="VEuPathDB" id="HostDB:ENSMUSG00000079428"/>
<dbReference type="eggNOG" id="ENOG502TCAG">
    <property type="taxonomic scope" value="Eukaryota"/>
</dbReference>
<dbReference type="GeneTree" id="ENSGT00950000183164"/>
<dbReference type="HOGENOM" id="CLU_181913_0_0_1"/>
<dbReference type="InParanoid" id="A3KGA4"/>
<dbReference type="OMA" id="DYRHFKG"/>
<dbReference type="OrthoDB" id="9510281at2759"/>
<dbReference type="PhylomeDB" id="A3KGA4"/>
<dbReference type="BioGRID-ORCS" id="100040972">
    <property type="hits" value="0 hits in 74 CRISPR screens"/>
</dbReference>
<dbReference type="PRO" id="PR:A3KGA4"/>
<dbReference type="Proteomes" id="UP000000589">
    <property type="component" value="Chromosome X"/>
</dbReference>
<dbReference type="RNAct" id="A3KGA4">
    <property type="molecule type" value="protein"/>
</dbReference>
<dbReference type="Bgee" id="ENSMUSG00000079428">
    <property type="expression patterns" value="Expressed in late embryo and 94 other cell types or tissues"/>
</dbReference>
<dbReference type="ExpressionAtlas" id="A3KGA4">
    <property type="expression patterns" value="baseline and differential"/>
</dbReference>
<dbReference type="GO" id="GO:0005654">
    <property type="term" value="C:nucleoplasm"/>
    <property type="evidence" value="ECO:0007669"/>
    <property type="project" value="Ensembl"/>
</dbReference>
<dbReference type="GO" id="GO:0005634">
    <property type="term" value="C:nucleus"/>
    <property type="evidence" value="ECO:0000250"/>
    <property type="project" value="UniProtKB"/>
</dbReference>
<dbReference type="GO" id="GO:0045892">
    <property type="term" value="P:negative regulation of DNA-templated transcription"/>
    <property type="evidence" value="ECO:0000250"/>
    <property type="project" value="UniProtKB"/>
</dbReference>
<dbReference type="GO" id="GO:0032088">
    <property type="term" value="P:negative regulation of NF-kappaB transcription factor activity"/>
    <property type="evidence" value="ECO:0000250"/>
    <property type="project" value="UniProtKB"/>
</dbReference>
<dbReference type="InterPro" id="IPR021156">
    <property type="entry name" value="TF_A-like/BEX"/>
</dbReference>
<dbReference type="Pfam" id="PF04538">
    <property type="entry name" value="BEX"/>
    <property type="match status" value="1"/>
</dbReference>
<reference key="1">
    <citation type="journal article" date="2009" name="PLoS Biol.">
        <title>Lineage-specific biology revealed by a finished genome assembly of the mouse.</title>
        <authorList>
            <person name="Church D.M."/>
            <person name="Goodstadt L."/>
            <person name="Hillier L.W."/>
            <person name="Zody M.C."/>
            <person name="Goldstein S."/>
            <person name="She X."/>
            <person name="Bult C.J."/>
            <person name="Agarwala R."/>
            <person name="Cherry J.L."/>
            <person name="DiCuccio M."/>
            <person name="Hlavina W."/>
            <person name="Kapustin Y."/>
            <person name="Meric P."/>
            <person name="Maglott D."/>
            <person name="Birtle Z."/>
            <person name="Marques A.C."/>
            <person name="Graves T."/>
            <person name="Zhou S."/>
            <person name="Teague B."/>
            <person name="Potamousis K."/>
            <person name="Churas C."/>
            <person name="Place M."/>
            <person name="Herschleb J."/>
            <person name="Runnheim R."/>
            <person name="Forrest D."/>
            <person name="Amos-Landgraf J."/>
            <person name="Schwartz D.C."/>
            <person name="Cheng Z."/>
            <person name="Lindblad-Toh K."/>
            <person name="Eichler E.E."/>
            <person name="Ponting C.P."/>
        </authorList>
    </citation>
    <scope>NUCLEOTIDE SEQUENCE [LARGE SCALE GENOMIC DNA]</scope>
    <source>
        <strain>C57BL/6J</strain>
    </source>
</reference>
<comment type="function">
    <text evidence="1">Plays a role in the negative regulation of NF-kappa-B signaling at the basal level by modulating transcriptional activity of NF-kappa-B on its target gene promoters. Associates with cyclin D1 promoter containing Myc E-box sequence and transcriptionally represses cyclin D1 expression. Regulates telomerase reverse transcriptase expression and telomerase activity in both ALT (alternative lengthening of telomeres)and telomerase-positive cell lines (By similarity).</text>
</comment>
<comment type="subcellular location">
    <subcellularLocation>
        <location evidence="1">Nucleus</location>
    </subcellularLocation>
</comment>
<comment type="similarity">
    <text evidence="4">Belongs to the TFS-II family. TFA subfamily.</text>
</comment>
<sequence>MQKSCNEKEGKPKGSEAKREDEQPCGALEGQRLEGNFRQRLLQSLEEFKEDIDYRHFKGEEMTGEEEEMERCLEEIRSLRKKFRALHSNRTHSRDHPF</sequence>
<gene>
    <name type="primary">Tceal7</name>
</gene>
<protein>
    <recommendedName>
        <fullName>Transcription elongation factor A protein-like 7</fullName>
        <shortName>TCEA-like protein 7</shortName>
    </recommendedName>
    <alternativeName>
        <fullName>Transcription elongation factor S-II protein-like 7</fullName>
    </alternativeName>
</protein>
<proteinExistence type="inferred from homology"/>
<evidence type="ECO:0000250" key="1"/>
<evidence type="ECO:0000255" key="2"/>
<evidence type="ECO:0000256" key="3">
    <source>
        <dbReference type="SAM" id="MobiDB-lite"/>
    </source>
</evidence>
<evidence type="ECO:0000305" key="4"/>